<gene>
    <name evidence="1" type="primary">purA</name>
    <name type="ordered locus">Msp_0986</name>
</gene>
<sequence>MTCTILVGGQWGDEGKGKCITYFCTQDKPEIIARAGVGPNAGHSVEFNGEKYGLRLTPSGFFNKEARLLIGAGVLVNPEVFEHELEYLSKYAVEGRTFMDANCAIITDKHTKQDKDSAYLSKKIGTTGSGCGPANADRINRTIDYAKDVPELEKYITDVPSEINKAIDEGKDVFIEGSQGFGLSLYYGTYPYVTSKDTCASTAAADVGVGPTKVDEVIVIFKSYITRVGEGPFPTEISPEEAEKMGIEEYGVVTGRKRRVGLFDKDFAKRSCMINGATQIALTCIDRLYPECAKVNKYEDLSQEARDYIEDIEENVGVPITIISTGPDLADTIDLRNEKLN</sequence>
<accession>Q2NFM9</accession>
<comment type="function">
    <text evidence="1">Plays an important role in the de novo pathway of purine nucleotide biosynthesis. Catalyzes the first committed step in the biosynthesis of AMP from IMP.</text>
</comment>
<comment type="catalytic activity">
    <reaction evidence="1">
        <text>IMP + L-aspartate + GTP = N(6)-(1,2-dicarboxyethyl)-AMP + GDP + phosphate + 2 H(+)</text>
        <dbReference type="Rhea" id="RHEA:15753"/>
        <dbReference type="ChEBI" id="CHEBI:15378"/>
        <dbReference type="ChEBI" id="CHEBI:29991"/>
        <dbReference type="ChEBI" id="CHEBI:37565"/>
        <dbReference type="ChEBI" id="CHEBI:43474"/>
        <dbReference type="ChEBI" id="CHEBI:57567"/>
        <dbReference type="ChEBI" id="CHEBI:58053"/>
        <dbReference type="ChEBI" id="CHEBI:58189"/>
        <dbReference type="EC" id="6.3.4.4"/>
    </reaction>
</comment>
<comment type="cofactor">
    <cofactor evidence="1">
        <name>Mg(2+)</name>
        <dbReference type="ChEBI" id="CHEBI:18420"/>
    </cofactor>
    <text evidence="1">Binds 1 Mg(2+) ion per subunit.</text>
</comment>
<comment type="pathway">
    <text evidence="1">Purine metabolism; AMP biosynthesis via de novo pathway; AMP from IMP: step 1/2.</text>
</comment>
<comment type="subunit">
    <text evidence="1">Homodimer.</text>
</comment>
<comment type="subcellular location">
    <subcellularLocation>
        <location evidence="1">Cytoplasm</location>
    </subcellularLocation>
</comment>
<comment type="similarity">
    <text evidence="1">Belongs to the adenylosuccinate synthetase family.</text>
</comment>
<feature type="chain" id="PRO_1000000861" description="Adenylosuccinate synthetase">
    <location>
        <begin position="1"/>
        <end position="341"/>
    </location>
</feature>
<feature type="active site" description="Proton acceptor" evidence="1">
    <location>
        <position position="13"/>
    </location>
</feature>
<feature type="active site" description="Proton donor" evidence="1">
    <location>
        <position position="43"/>
    </location>
</feature>
<feature type="binding site" evidence="1">
    <location>
        <begin position="12"/>
        <end position="18"/>
    </location>
    <ligand>
        <name>GTP</name>
        <dbReference type="ChEBI" id="CHEBI:37565"/>
    </ligand>
</feature>
<feature type="binding site" description="in other chain" evidence="1">
    <location>
        <begin position="13"/>
        <end position="16"/>
    </location>
    <ligand>
        <name>IMP</name>
        <dbReference type="ChEBI" id="CHEBI:58053"/>
        <note>ligand shared between dimeric partners</note>
    </ligand>
</feature>
<feature type="binding site" evidence="1">
    <location>
        <position position="13"/>
    </location>
    <ligand>
        <name>Mg(2+)</name>
        <dbReference type="ChEBI" id="CHEBI:18420"/>
    </ligand>
</feature>
<feature type="binding site" description="in other chain" evidence="1">
    <location>
        <begin position="40"/>
        <end position="43"/>
    </location>
    <ligand>
        <name>IMP</name>
        <dbReference type="ChEBI" id="CHEBI:58053"/>
        <note>ligand shared between dimeric partners</note>
    </ligand>
</feature>
<feature type="binding site" evidence="1">
    <location>
        <begin position="42"/>
        <end position="44"/>
    </location>
    <ligand>
        <name>GTP</name>
        <dbReference type="ChEBI" id="CHEBI:37565"/>
    </ligand>
</feature>
<feature type="binding site" evidence="1">
    <location>
        <position position="42"/>
    </location>
    <ligand>
        <name>Mg(2+)</name>
        <dbReference type="ChEBI" id="CHEBI:18420"/>
    </ligand>
</feature>
<feature type="binding site" description="in other chain" evidence="1">
    <location>
        <position position="127"/>
    </location>
    <ligand>
        <name>IMP</name>
        <dbReference type="ChEBI" id="CHEBI:58053"/>
        <note>ligand shared between dimeric partners</note>
    </ligand>
</feature>
<feature type="binding site" evidence="1">
    <location>
        <position position="141"/>
    </location>
    <ligand>
        <name>IMP</name>
        <dbReference type="ChEBI" id="CHEBI:58053"/>
        <note>ligand shared between dimeric partners</note>
    </ligand>
</feature>
<feature type="binding site" description="in other chain" evidence="1">
    <location>
        <position position="179"/>
    </location>
    <ligand>
        <name>IMP</name>
        <dbReference type="ChEBI" id="CHEBI:58053"/>
        <note>ligand shared between dimeric partners</note>
    </ligand>
</feature>
<feature type="binding site" description="in other chain" evidence="1">
    <location>
        <position position="194"/>
    </location>
    <ligand>
        <name>IMP</name>
        <dbReference type="ChEBI" id="CHEBI:58053"/>
        <note>ligand shared between dimeric partners</note>
    </ligand>
</feature>
<feature type="binding site" evidence="1">
    <location>
        <begin position="252"/>
        <end position="258"/>
    </location>
    <ligand>
        <name>substrate</name>
    </ligand>
</feature>
<feature type="binding site" description="in other chain" evidence="1">
    <location>
        <position position="256"/>
    </location>
    <ligand>
        <name>IMP</name>
        <dbReference type="ChEBI" id="CHEBI:58053"/>
        <note>ligand shared between dimeric partners</note>
    </ligand>
</feature>
<feature type="binding site" evidence="1">
    <location>
        <position position="258"/>
    </location>
    <ligand>
        <name>GTP</name>
        <dbReference type="ChEBI" id="CHEBI:37565"/>
    </ligand>
</feature>
<feature type="binding site" evidence="1">
    <location>
        <begin position="284"/>
        <end position="286"/>
    </location>
    <ligand>
        <name>GTP</name>
        <dbReference type="ChEBI" id="CHEBI:37565"/>
    </ligand>
</feature>
<feature type="binding site" evidence="1">
    <location>
        <begin position="324"/>
        <end position="326"/>
    </location>
    <ligand>
        <name>GTP</name>
        <dbReference type="ChEBI" id="CHEBI:37565"/>
    </ligand>
</feature>
<name>PURA_METST</name>
<dbReference type="EC" id="6.3.4.4" evidence="1"/>
<dbReference type="EMBL" id="CP000102">
    <property type="protein sequence ID" value="ABC57374.1"/>
    <property type="molecule type" value="Genomic_DNA"/>
</dbReference>
<dbReference type="RefSeq" id="WP_011406573.1">
    <property type="nucleotide sequence ID" value="NC_007681.1"/>
</dbReference>
<dbReference type="SMR" id="Q2NFM9"/>
<dbReference type="STRING" id="339860.Msp_0986"/>
<dbReference type="KEGG" id="mst:Msp_0986"/>
<dbReference type="eggNOG" id="arCOG04387">
    <property type="taxonomic scope" value="Archaea"/>
</dbReference>
<dbReference type="HOGENOM" id="CLU_029848_0_0_2"/>
<dbReference type="OrthoDB" id="372247at2157"/>
<dbReference type="UniPathway" id="UPA00075">
    <property type="reaction ID" value="UER00335"/>
</dbReference>
<dbReference type="Proteomes" id="UP000001931">
    <property type="component" value="Chromosome"/>
</dbReference>
<dbReference type="GO" id="GO:0005737">
    <property type="term" value="C:cytoplasm"/>
    <property type="evidence" value="ECO:0007669"/>
    <property type="project" value="UniProtKB-SubCell"/>
</dbReference>
<dbReference type="GO" id="GO:0004019">
    <property type="term" value="F:adenylosuccinate synthase activity"/>
    <property type="evidence" value="ECO:0007669"/>
    <property type="project" value="UniProtKB-UniRule"/>
</dbReference>
<dbReference type="GO" id="GO:0005525">
    <property type="term" value="F:GTP binding"/>
    <property type="evidence" value="ECO:0007669"/>
    <property type="project" value="UniProtKB-UniRule"/>
</dbReference>
<dbReference type="GO" id="GO:0000287">
    <property type="term" value="F:magnesium ion binding"/>
    <property type="evidence" value="ECO:0007669"/>
    <property type="project" value="UniProtKB-UniRule"/>
</dbReference>
<dbReference type="GO" id="GO:0044208">
    <property type="term" value="P:'de novo' AMP biosynthetic process"/>
    <property type="evidence" value="ECO:0007669"/>
    <property type="project" value="UniProtKB-UniRule"/>
</dbReference>
<dbReference type="GO" id="GO:0046040">
    <property type="term" value="P:IMP metabolic process"/>
    <property type="evidence" value="ECO:0007669"/>
    <property type="project" value="TreeGrafter"/>
</dbReference>
<dbReference type="CDD" id="cd03108">
    <property type="entry name" value="AdSS"/>
    <property type="match status" value="1"/>
</dbReference>
<dbReference type="FunFam" id="3.40.440.10:FF:000007">
    <property type="entry name" value="Adenylosuccinate synthetase"/>
    <property type="match status" value="1"/>
</dbReference>
<dbReference type="Gene3D" id="3.40.440.10">
    <property type="entry name" value="Adenylosuccinate Synthetase, subunit A, domain 1"/>
    <property type="match status" value="2"/>
</dbReference>
<dbReference type="Gene3D" id="1.10.300.10">
    <property type="entry name" value="Adenylosuccinate Synthetase, subunit A, domain 2"/>
    <property type="match status" value="2"/>
</dbReference>
<dbReference type="Gene3D" id="3.90.170.10">
    <property type="entry name" value="Adenylosuccinate Synthetase, subunit A, domain 3"/>
    <property type="match status" value="2"/>
</dbReference>
<dbReference type="HAMAP" id="MF_00011">
    <property type="entry name" value="Adenylosucc_synth"/>
    <property type="match status" value="1"/>
</dbReference>
<dbReference type="InterPro" id="IPR018220">
    <property type="entry name" value="Adenylosuccin_syn_GTP-bd"/>
</dbReference>
<dbReference type="InterPro" id="IPR042109">
    <property type="entry name" value="Adenylosuccinate_synth_dom1"/>
</dbReference>
<dbReference type="InterPro" id="IPR042110">
    <property type="entry name" value="Adenylosuccinate_synth_dom2"/>
</dbReference>
<dbReference type="InterPro" id="IPR042111">
    <property type="entry name" value="Adenylosuccinate_synth_dom3"/>
</dbReference>
<dbReference type="InterPro" id="IPR001114">
    <property type="entry name" value="Adenylosuccinate_synthetase"/>
</dbReference>
<dbReference type="InterPro" id="IPR027417">
    <property type="entry name" value="P-loop_NTPase"/>
</dbReference>
<dbReference type="NCBIfam" id="NF003295">
    <property type="entry name" value="PRK04293.1"/>
    <property type="match status" value="1"/>
</dbReference>
<dbReference type="PANTHER" id="PTHR11846">
    <property type="entry name" value="ADENYLOSUCCINATE SYNTHETASE"/>
    <property type="match status" value="1"/>
</dbReference>
<dbReference type="PANTHER" id="PTHR11846:SF0">
    <property type="entry name" value="ADENYLOSUCCINATE SYNTHETASE"/>
    <property type="match status" value="1"/>
</dbReference>
<dbReference type="Pfam" id="PF00709">
    <property type="entry name" value="Adenylsucc_synt"/>
    <property type="match status" value="3"/>
</dbReference>
<dbReference type="SMART" id="SM00788">
    <property type="entry name" value="Adenylsucc_synt"/>
    <property type="match status" value="1"/>
</dbReference>
<dbReference type="SUPFAM" id="SSF52540">
    <property type="entry name" value="P-loop containing nucleoside triphosphate hydrolases"/>
    <property type="match status" value="1"/>
</dbReference>
<dbReference type="PROSITE" id="PS01266">
    <property type="entry name" value="ADENYLOSUCCIN_SYN_1"/>
    <property type="match status" value="1"/>
</dbReference>
<keyword id="KW-0963">Cytoplasm</keyword>
<keyword id="KW-0342">GTP-binding</keyword>
<keyword id="KW-0436">Ligase</keyword>
<keyword id="KW-0460">Magnesium</keyword>
<keyword id="KW-0479">Metal-binding</keyword>
<keyword id="KW-0547">Nucleotide-binding</keyword>
<keyword id="KW-0658">Purine biosynthesis</keyword>
<keyword id="KW-1185">Reference proteome</keyword>
<proteinExistence type="inferred from homology"/>
<reference key="1">
    <citation type="journal article" date="2006" name="J. Bacteriol.">
        <title>The genome sequence of Methanosphaera stadtmanae reveals why this human intestinal archaeon is restricted to methanol and H2 for methane formation and ATP synthesis.</title>
        <authorList>
            <person name="Fricke W.F."/>
            <person name="Seedorf H."/>
            <person name="Henne A."/>
            <person name="Kruer M."/>
            <person name="Liesegang H."/>
            <person name="Hedderich R."/>
            <person name="Gottschalk G."/>
            <person name="Thauer R.K."/>
        </authorList>
    </citation>
    <scope>NUCLEOTIDE SEQUENCE [LARGE SCALE GENOMIC DNA]</scope>
    <source>
        <strain>ATCC 43021 / DSM 3091 / JCM 11832 / MCB-3</strain>
    </source>
</reference>
<organism>
    <name type="scientific">Methanosphaera stadtmanae (strain ATCC 43021 / DSM 3091 / JCM 11832 / MCB-3)</name>
    <dbReference type="NCBI Taxonomy" id="339860"/>
    <lineage>
        <taxon>Archaea</taxon>
        <taxon>Methanobacteriati</taxon>
        <taxon>Methanobacteriota</taxon>
        <taxon>Methanomada group</taxon>
        <taxon>Methanobacteria</taxon>
        <taxon>Methanobacteriales</taxon>
        <taxon>Methanobacteriaceae</taxon>
        <taxon>Methanosphaera</taxon>
    </lineage>
</organism>
<evidence type="ECO:0000255" key="1">
    <source>
        <dbReference type="HAMAP-Rule" id="MF_00011"/>
    </source>
</evidence>
<protein>
    <recommendedName>
        <fullName evidence="1">Adenylosuccinate synthetase</fullName>
        <shortName evidence="1">AMPSase</shortName>
        <shortName evidence="1">AdSS</shortName>
        <ecNumber evidence="1">6.3.4.4</ecNumber>
    </recommendedName>
    <alternativeName>
        <fullName evidence="1">IMP--aspartate ligase</fullName>
    </alternativeName>
</protein>